<evidence type="ECO:0000255" key="1">
    <source>
        <dbReference type="HAMAP-Rule" id="MF_01014"/>
    </source>
</evidence>
<comment type="catalytic activity">
    <reaction evidence="1">
        <text>1-(5-phospho-beta-D-ribosyl)-5-[(5-phospho-beta-D-ribosylamino)methylideneamino]imidazole-4-carboxamide = 5-[(5-phospho-1-deoxy-D-ribulos-1-ylimino)methylamino]-1-(5-phospho-beta-D-ribosyl)imidazole-4-carboxamide</text>
        <dbReference type="Rhea" id="RHEA:15469"/>
        <dbReference type="ChEBI" id="CHEBI:58435"/>
        <dbReference type="ChEBI" id="CHEBI:58525"/>
        <dbReference type="EC" id="5.3.1.16"/>
    </reaction>
</comment>
<comment type="pathway">
    <text evidence="1">Amino-acid biosynthesis; L-histidine biosynthesis; L-histidine from 5-phospho-alpha-D-ribose 1-diphosphate: step 4/9.</text>
</comment>
<comment type="subcellular location">
    <subcellularLocation>
        <location evidence="1">Cytoplasm</location>
    </subcellularLocation>
</comment>
<comment type="similarity">
    <text evidence="1">Belongs to the HisA/HisF family.</text>
</comment>
<feature type="chain" id="PRO_1000135079" description="1-(5-phosphoribosyl)-5-[(5-phosphoribosylamino)methylideneamino] imidazole-4-carboxamide isomerase">
    <location>
        <begin position="1"/>
        <end position="239"/>
    </location>
</feature>
<feature type="active site" description="Proton acceptor" evidence="1">
    <location>
        <position position="8"/>
    </location>
</feature>
<feature type="active site" description="Proton donor" evidence="1">
    <location>
        <position position="129"/>
    </location>
</feature>
<dbReference type="EC" id="5.3.1.16" evidence="1"/>
<dbReference type="EMBL" id="CP001186">
    <property type="protein sequence ID" value="ACK94517.1"/>
    <property type="molecule type" value="Genomic_DNA"/>
</dbReference>
<dbReference type="RefSeq" id="WP_000402290.1">
    <property type="nucleotide sequence ID" value="NC_011772.1"/>
</dbReference>
<dbReference type="SMR" id="B7INA2"/>
<dbReference type="KEGG" id="bcg:BCG9842_B3882"/>
<dbReference type="HOGENOM" id="CLU_048577_1_1_9"/>
<dbReference type="UniPathway" id="UPA00031">
    <property type="reaction ID" value="UER00009"/>
</dbReference>
<dbReference type="Proteomes" id="UP000006744">
    <property type="component" value="Chromosome"/>
</dbReference>
<dbReference type="GO" id="GO:0005737">
    <property type="term" value="C:cytoplasm"/>
    <property type="evidence" value="ECO:0007669"/>
    <property type="project" value="UniProtKB-SubCell"/>
</dbReference>
<dbReference type="GO" id="GO:0003949">
    <property type="term" value="F:1-(5-phosphoribosyl)-5-[(5-phosphoribosylamino)methylideneamino]imidazole-4-carboxamide isomerase activity"/>
    <property type="evidence" value="ECO:0007669"/>
    <property type="project" value="UniProtKB-UniRule"/>
</dbReference>
<dbReference type="GO" id="GO:0000105">
    <property type="term" value="P:L-histidine biosynthetic process"/>
    <property type="evidence" value="ECO:0007669"/>
    <property type="project" value="UniProtKB-UniRule"/>
</dbReference>
<dbReference type="GO" id="GO:0000162">
    <property type="term" value="P:L-tryptophan biosynthetic process"/>
    <property type="evidence" value="ECO:0007669"/>
    <property type="project" value="TreeGrafter"/>
</dbReference>
<dbReference type="CDD" id="cd04732">
    <property type="entry name" value="HisA"/>
    <property type="match status" value="1"/>
</dbReference>
<dbReference type="FunFam" id="3.20.20.70:FF:000009">
    <property type="entry name" value="1-(5-phosphoribosyl)-5-[(5-phosphoribosylamino)methylideneamino] imidazole-4-carboxamide isomerase"/>
    <property type="match status" value="1"/>
</dbReference>
<dbReference type="Gene3D" id="3.20.20.70">
    <property type="entry name" value="Aldolase class I"/>
    <property type="match status" value="1"/>
</dbReference>
<dbReference type="HAMAP" id="MF_01014">
    <property type="entry name" value="HisA"/>
    <property type="match status" value="1"/>
</dbReference>
<dbReference type="InterPro" id="IPR013785">
    <property type="entry name" value="Aldolase_TIM"/>
</dbReference>
<dbReference type="InterPro" id="IPR006062">
    <property type="entry name" value="His_biosynth"/>
</dbReference>
<dbReference type="InterPro" id="IPR006063">
    <property type="entry name" value="HisA_bact_arch"/>
</dbReference>
<dbReference type="InterPro" id="IPR044524">
    <property type="entry name" value="Isoase_HisA-like"/>
</dbReference>
<dbReference type="InterPro" id="IPR023016">
    <property type="entry name" value="Isoase_HisA-like_bact"/>
</dbReference>
<dbReference type="InterPro" id="IPR011060">
    <property type="entry name" value="RibuloseP-bd_barrel"/>
</dbReference>
<dbReference type="NCBIfam" id="TIGR00007">
    <property type="entry name" value="1-(5-phosphoribosyl)-5-[(5-phosphoribosylamino)methylideneamino]imidazole-4-carboxamide isomerase"/>
    <property type="match status" value="1"/>
</dbReference>
<dbReference type="PANTHER" id="PTHR43090">
    <property type="entry name" value="1-(5-PHOSPHORIBOSYL)-5-[(5-PHOSPHORIBOSYLAMINO)METHYLIDENEAMINO] IMIDAZOLE-4-CARBOXAMIDE ISOMERASE"/>
    <property type="match status" value="1"/>
</dbReference>
<dbReference type="PANTHER" id="PTHR43090:SF2">
    <property type="entry name" value="1-(5-PHOSPHORIBOSYL)-5-[(5-PHOSPHORIBOSYLAMINO)METHYLIDENEAMINO] IMIDAZOLE-4-CARBOXAMIDE ISOMERASE"/>
    <property type="match status" value="1"/>
</dbReference>
<dbReference type="Pfam" id="PF00977">
    <property type="entry name" value="His_biosynth"/>
    <property type="match status" value="1"/>
</dbReference>
<dbReference type="SUPFAM" id="SSF51366">
    <property type="entry name" value="Ribulose-phoshate binding barrel"/>
    <property type="match status" value="1"/>
</dbReference>
<keyword id="KW-0028">Amino-acid biosynthesis</keyword>
<keyword id="KW-0963">Cytoplasm</keyword>
<keyword id="KW-0368">Histidine biosynthesis</keyword>
<keyword id="KW-0413">Isomerase</keyword>
<reference key="1">
    <citation type="submission" date="2008-10" db="EMBL/GenBank/DDBJ databases">
        <title>Genome sequence of Bacillus cereus G9842.</title>
        <authorList>
            <person name="Dodson R.J."/>
            <person name="Durkin A.S."/>
            <person name="Rosovitz M.J."/>
            <person name="Rasko D.A."/>
            <person name="Hoffmaster A."/>
            <person name="Ravel J."/>
            <person name="Sutton G."/>
        </authorList>
    </citation>
    <scope>NUCLEOTIDE SEQUENCE [LARGE SCALE GENOMIC DNA]</scope>
    <source>
        <strain>G9842</strain>
    </source>
</reference>
<protein>
    <recommendedName>
        <fullName evidence="1">1-(5-phosphoribosyl)-5-[(5-phosphoribosylamino)methylideneamino] imidazole-4-carboxamide isomerase</fullName>
        <ecNumber evidence="1">5.3.1.16</ecNumber>
    </recommendedName>
    <alternativeName>
        <fullName evidence="1">Phosphoribosylformimino-5-aminoimidazole carboxamide ribotide isomerase</fullName>
    </alternativeName>
</protein>
<gene>
    <name evidence="1" type="primary">hisA</name>
    <name type="ordered locus">BCG9842_B3882</name>
</gene>
<sequence>MEIFPAIDLKEGRCVRLYQGEFSKETVMNEDPVAQAIIFEKLGAEILHIVDLDGAIAGESLNFLVIEKICKAVRIPVQVGGGIRSLKAVEKLLSVGVEKVILGTAALYDKSFLEEAVHLYKEKIIVGIDAKNGFVATRGWLDLSEISYISLAKQMESLGVQTIVFTDISKDGTLAGPNFEQLTLLQKSVGIRLIASGGVASIQDVKKLNDMNIYGVIIGKALYEKKIDLEEVLQVTKLC</sequence>
<accession>B7INA2</accession>
<name>HIS4_BACC2</name>
<proteinExistence type="inferred from homology"/>
<organism>
    <name type="scientific">Bacillus cereus (strain G9842)</name>
    <dbReference type="NCBI Taxonomy" id="405531"/>
    <lineage>
        <taxon>Bacteria</taxon>
        <taxon>Bacillati</taxon>
        <taxon>Bacillota</taxon>
        <taxon>Bacilli</taxon>
        <taxon>Bacillales</taxon>
        <taxon>Bacillaceae</taxon>
        <taxon>Bacillus</taxon>
        <taxon>Bacillus cereus group</taxon>
    </lineage>
</organism>